<evidence type="ECO:0000255" key="1">
    <source>
        <dbReference type="HAMAP-Rule" id="MF_00150"/>
    </source>
</evidence>
<dbReference type="EC" id="1.2.1.38" evidence="1"/>
<dbReference type="EMBL" id="AL939109">
    <property type="protein sequence ID" value="CAA20791.1"/>
    <property type="molecule type" value="Genomic_DNA"/>
</dbReference>
<dbReference type="EMBL" id="X66783">
    <property type="protein sequence ID" value="CAA47283.1"/>
    <property type="molecule type" value="Genomic_DNA"/>
</dbReference>
<dbReference type="PIR" id="S22861">
    <property type="entry name" value="S22861"/>
</dbReference>
<dbReference type="PIR" id="T36815">
    <property type="entry name" value="T36815"/>
</dbReference>
<dbReference type="RefSeq" id="NP_625856.1">
    <property type="nucleotide sequence ID" value="NC_003888.3"/>
</dbReference>
<dbReference type="RefSeq" id="WP_003977244.1">
    <property type="nucleotide sequence ID" value="NZ_VNID01000021.1"/>
</dbReference>
<dbReference type="SMR" id="P54895"/>
<dbReference type="FunCoup" id="P54895">
    <property type="interactions" value="133"/>
</dbReference>
<dbReference type="STRING" id="100226.gene:17759173"/>
<dbReference type="PaxDb" id="100226-SCO1580"/>
<dbReference type="GeneID" id="91387444"/>
<dbReference type="KEGG" id="sco:SCO1580"/>
<dbReference type="PATRIC" id="fig|100226.15.peg.1592"/>
<dbReference type="eggNOG" id="COG0002">
    <property type="taxonomic scope" value="Bacteria"/>
</dbReference>
<dbReference type="HOGENOM" id="CLU_006384_0_0_11"/>
<dbReference type="InParanoid" id="P54895"/>
<dbReference type="OrthoDB" id="9801289at2"/>
<dbReference type="PhylomeDB" id="P54895"/>
<dbReference type="UniPathway" id="UPA00068">
    <property type="reaction ID" value="UER00108"/>
</dbReference>
<dbReference type="Proteomes" id="UP000001973">
    <property type="component" value="Chromosome"/>
</dbReference>
<dbReference type="GO" id="GO:0005737">
    <property type="term" value="C:cytoplasm"/>
    <property type="evidence" value="ECO:0007669"/>
    <property type="project" value="UniProtKB-SubCell"/>
</dbReference>
<dbReference type="GO" id="GO:0003942">
    <property type="term" value="F:N-acetyl-gamma-glutamyl-phosphate reductase activity"/>
    <property type="evidence" value="ECO:0007669"/>
    <property type="project" value="UniProtKB-UniRule"/>
</dbReference>
<dbReference type="GO" id="GO:0051287">
    <property type="term" value="F:NAD binding"/>
    <property type="evidence" value="ECO:0007669"/>
    <property type="project" value="InterPro"/>
</dbReference>
<dbReference type="GO" id="GO:0070401">
    <property type="term" value="F:NADP+ binding"/>
    <property type="evidence" value="ECO:0007669"/>
    <property type="project" value="InterPro"/>
</dbReference>
<dbReference type="GO" id="GO:0006526">
    <property type="term" value="P:L-arginine biosynthetic process"/>
    <property type="evidence" value="ECO:0007669"/>
    <property type="project" value="UniProtKB-UniRule"/>
</dbReference>
<dbReference type="CDD" id="cd24148">
    <property type="entry name" value="AGPR_1_actinobacAGPR_like"/>
    <property type="match status" value="1"/>
</dbReference>
<dbReference type="CDD" id="cd23934">
    <property type="entry name" value="AGPR_1_C"/>
    <property type="match status" value="1"/>
</dbReference>
<dbReference type="FunFam" id="3.30.360.10:FF:000014">
    <property type="entry name" value="N-acetyl-gamma-glutamyl-phosphate reductase"/>
    <property type="match status" value="1"/>
</dbReference>
<dbReference type="Gene3D" id="3.30.360.10">
    <property type="entry name" value="Dihydrodipicolinate Reductase, domain 2"/>
    <property type="match status" value="1"/>
</dbReference>
<dbReference type="Gene3D" id="3.40.50.720">
    <property type="entry name" value="NAD(P)-binding Rossmann-like Domain"/>
    <property type="match status" value="1"/>
</dbReference>
<dbReference type="HAMAP" id="MF_00150">
    <property type="entry name" value="ArgC_type1"/>
    <property type="match status" value="1"/>
</dbReference>
<dbReference type="InterPro" id="IPR023013">
    <property type="entry name" value="AGPR_AS"/>
</dbReference>
<dbReference type="InterPro" id="IPR000706">
    <property type="entry name" value="AGPR_type-1"/>
</dbReference>
<dbReference type="InterPro" id="IPR036291">
    <property type="entry name" value="NAD(P)-bd_dom_sf"/>
</dbReference>
<dbReference type="InterPro" id="IPR050085">
    <property type="entry name" value="NAGSA_dehydrogenase"/>
</dbReference>
<dbReference type="InterPro" id="IPR000534">
    <property type="entry name" value="Semialdehyde_DH_NAD-bd"/>
</dbReference>
<dbReference type="NCBIfam" id="TIGR01850">
    <property type="entry name" value="argC"/>
    <property type="match status" value="1"/>
</dbReference>
<dbReference type="PANTHER" id="PTHR32338:SF10">
    <property type="entry name" value="N-ACETYL-GAMMA-GLUTAMYL-PHOSPHATE REDUCTASE, CHLOROPLASTIC-RELATED"/>
    <property type="match status" value="1"/>
</dbReference>
<dbReference type="PANTHER" id="PTHR32338">
    <property type="entry name" value="N-ACETYL-GAMMA-GLUTAMYL-PHOSPHATE REDUCTASE, CHLOROPLASTIC-RELATED-RELATED"/>
    <property type="match status" value="1"/>
</dbReference>
<dbReference type="Pfam" id="PF01118">
    <property type="entry name" value="Semialdhyde_dh"/>
    <property type="match status" value="1"/>
</dbReference>
<dbReference type="Pfam" id="PF22698">
    <property type="entry name" value="Semialdhyde_dhC_1"/>
    <property type="match status" value="1"/>
</dbReference>
<dbReference type="SMART" id="SM00859">
    <property type="entry name" value="Semialdhyde_dh"/>
    <property type="match status" value="1"/>
</dbReference>
<dbReference type="SUPFAM" id="SSF55347">
    <property type="entry name" value="Glyceraldehyde-3-phosphate dehydrogenase-like, C-terminal domain"/>
    <property type="match status" value="1"/>
</dbReference>
<dbReference type="SUPFAM" id="SSF51735">
    <property type="entry name" value="NAD(P)-binding Rossmann-fold domains"/>
    <property type="match status" value="1"/>
</dbReference>
<dbReference type="PROSITE" id="PS01224">
    <property type="entry name" value="ARGC"/>
    <property type="match status" value="1"/>
</dbReference>
<reference key="1">
    <citation type="journal article" date="2002" name="Nature">
        <title>Complete genome sequence of the model actinomycete Streptomyces coelicolor A3(2).</title>
        <authorList>
            <person name="Bentley S.D."/>
            <person name="Chater K.F."/>
            <person name="Cerdeno-Tarraga A.-M."/>
            <person name="Challis G.L."/>
            <person name="Thomson N.R."/>
            <person name="James K.D."/>
            <person name="Harris D.E."/>
            <person name="Quail M.A."/>
            <person name="Kieser H."/>
            <person name="Harper D."/>
            <person name="Bateman A."/>
            <person name="Brown S."/>
            <person name="Chandra G."/>
            <person name="Chen C.W."/>
            <person name="Collins M."/>
            <person name="Cronin A."/>
            <person name="Fraser A."/>
            <person name="Goble A."/>
            <person name="Hidalgo J."/>
            <person name="Hornsby T."/>
            <person name="Howarth S."/>
            <person name="Huang C.-H."/>
            <person name="Kieser T."/>
            <person name="Larke L."/>
            <person name="Murphy L.D."/>
            <person name="Oliver K."/>
            <person name="O'Neil S."/>
            <person name="Rabbinowitsch E."/>
            <person name="Rajandream M.A."/>
            <person name="Rutherford K.M."/>
            <person name="Rutter S."/>
            <person name="Seeger K."/>
            <person name="Saunders D."/>
            <person name="Sharp S."/>
            <person name="Squares R."/>
            <person name="Squares S."/>
            <person name="Taylor K."/>
            <person name="Warren T."/>
            <person name="Wietzorrek A."/>
            <person name="Woodward J.R."/>
            <person name="Barrell B.G."/>
            <person name="Parkhill J."/>
            <person name="Hopwood D.A."/>
        </authorList>
    </citation>
    <scope>NUCLEOTIDE SEQUENCE [LARGE SCALE GENOMIC DNA]</scope>
    <source>
        <strain>ATCC BAA-471 / A3(2) / M145</strain>
    </source>
</reference>
<reference key="2">
    <citation type="journal article" date="1994" name="Microbiology">
        <title>Cloning and expression in Escherichia coli of a Streptomyces coelicolor A3(2) argCJB gene cluster.</title>
        <authorList>
            <person name="Hindle Z."/>
            <person name="Callis R."/>
            <person name="Dowden S."/>
            <person name="Rudd B.A.M."/>
            <person name="Baumberg S."/>
        </authorList>
    </citation>
    <scope>NUCLEOTIDE SEQUENCE [GENOMIC DNA] OF 1-249</scope>
    <source>
        <strain>A3(2) / NRRL B-16638</strain>
    </source>
</reference>
<accession>P54895</accession>
<proteinExistence type="inferred from homology"/>
<sequence length="342" mass="34615">MAVRAAVAGASGYAGGELLRLLLTHPEVEIGALTGNSNAGQRLGALQPHLLPLADRVLEATTPEVLGGHDVVFLALPHGQSAAVAEQLGPDVLVVDMGADFRLKDAGDWERFYGSPHAGTWPYGLPELPGARAALEGSKRIAVPGCYPTAVSLALFPAYAASLAEPEAVIVAASGTSGAGKAAKPHLLGSEVMGSMSPYGVGGGHRHTPEMIQNLGAVAGEPVTVSFTPTLAPMPRGILATCTAKAKPGVTAESVRAAYEKALADEPFVHLLPEGQWPATASVYGSNAVQVQVAHDAAAGRIIAISAIDNLAKGTAGGAVQSMNLALGLDETTGLTTIGVAP</sequence>
<gene>
    <name evidence="1" type="primary">argC</name>
    <name type="ordered locus">SCO1580</name>
    <name type="ORF">SCI35.02c</name>
</gene>
<organism>
    <name type="scientific">Streptomyces coelicolor (strain ATCC BAA-471 / A3(2) / M145)</name>
    <dbReference type="NCBI Taxonomy" id="100226"/>
    <lineage>
        <taxon>Bacteria</taxon>
        <taxon>Bacillati</taxon>
        <taxon>Actinomycetota</taxon>
        <taxon>Actinomycetes</taxon>
        <taxon>Kitasatosporales</taxon>
        <taxon>Streptomycetaceae</taxon>
        <taxon>Streptomyces</taxon>
        <taxon>Streptomyces albidoflavus group</taxon>
    </lineage>
</organism>
<keyword id="KW-0028">Amino-acid biosynthesis</keyword>
<keyword id="KW-0055">Arginine biosynthesis</keyword>
<keyword id="KW-0963">Cytoplasm</keyword>
<keyword id="KW-0521">NADP</keyword>
<keyword id="KW-0560">Oxidoreductase</keyword>
<keyword id="KW-1185">Reference proteome</keyword>
<name>ARGC_STRCO</name>
<protein>
    <recommendedName>
        <fullName evidence="1">N-acetyl-gamma-glutamyl-phosphate reductase</fullName>
        <shortName evidence="1">AGPR</shortName>
        <ecNumber evidence="1">1.2.1.38</ecNumber>
    </recommendedName>
    <alternativeName>
        <fullName evidence="1">N-acetyl-glutamate semialdehyde dehydrogenase</fullName>
        <shortName evidence="1">NAGSA dehydrogenase</shortName>
    </alternativeName>
</protein>
<feature type="chain" id="PRO_0000112458" description="N-acetyl-gamma-glutamyl-phosphate reductase">
    <location>
        <begin position="1"/>
        <end position="342"/>
    </location>
</feature>
<feature type="active site" evidence="1">
    <location>
        <position position="146"/>
    </location>
</feature>
<comment type="function">
    <text evidence="1">Catalyzes the NADPH-dependent reduction of N-acetyl-5-glutamyl phosphate to yield N-acetyl-L-glutamate 5-semialdehyde.</text>
</comment>
<comment type="catalytic activity">
    <reaction evidence="1">
        <text>N-acetyl-L-glutamate 5-semialdehyde + phosphate + NADP(+) = N-acetyl-L-glutamyl 5-phosphate + NADPH + H(+)</text>
        <dbReference type="Rhea" id="RHEA:21588"/>
        <dbReference type="ChEBI" id="CHEBI:15378"/>
        <dbReference type="ChEBI" id="CHEBI:29123"/>
        <dbReference type="ChEBI" id="CHEBI:43474"/>
        <dbReference type="ChEBI" id="CHEBI:57783"/>
        <dbReference type="ChEBI" id="CHEBI:57936"/>
        <dbReference type="ChEBI" id="CHEBI:58349"/>
        <dbReference type="EC" id="1.2.1.38"/>
    </reaction>
</comment>
<comment type="pathway">
    <text evidence="1">Amino-acid biosynthesis; L-arginine biosynthesis; N(2)-acetyl-L-ornithine from L-glutamate: step 3/4.</text>
</comment>
<comment type="subcellular location">
    <subcellularLocation>
        <location evidence="1">Cytoplasm</location>
    </subcellularLocation>
</comment>
<comment type="similarity">
    <text evidence="1">Belongs to the NAGSA dehydrogenase family. Type 1 subfamily.</text>
</comment>